<name>ISPT_PROMP</name>
<protein>
    <recommendedName>
        <fullName evidence="1">Isoprenyl transferase</fullName>
        <ecNumber evidence="1">2.5.1.-</ecNumber>
    </recommendedName>
</protein>
<accession>Q7V102</accession>
<gene>
    <name evidence="1" type="primary">uppS</name>
    <name type="ordered locus">PMM1092</name>
</gene>
<sequence length="272" mass="30966">MRLNNLQLKNNLNLSNKLDKERIPEHIAIIMDGNGRWATKKGLPRSFGHNKGVSVLKEIIKASKNIDCKVLTVYAFSTENWIRPSNEVDFLINLFEKVLKKEISEIHQESIKIKFIGDLSPLPNSLKLLIKSSEALTNNNKKFTLNICVNYGGRQEIVKAAKEIAIKSSSGKIKPSDIDEQLFNSELLTKGSMDPELLIRTSGEKRISNFLLWQLAYSEIYVTDVLWPDFTESEFLKAIIDYQSRNRRFGGIESLSNESFEDSCYSSLSKND</sequence>
<feature type="chain" id="PRO_0000123653" description="Isoprenyl transferase">
    <location>
        <begin position="1"/>
        <end position="272"/>
    </location>
</feature>
<feature type="active site" evidence="1">
    <location>
        <position position="32"/>
    </location>
</feature>
<feature type="active site" description="Proton acceptor" evidence="1">
    <location>
        <position position="80"/>
    </location>
</feature>
<feature type="binding site" evidence="1">
    <location>
        <position position="32"/>
    </location>
    <ligand>
        <name>Mg(2+)</name>
        <dbReference type="ChEBI" id="CHEBI:18420"/>
    </ligand>
</feature>
<feature type="binding site" evidence="1">
    <location>
        <begin position="33"/>
        <end position="36"/>
    </location>
    <ligand>
        <name>substrate</name>
    </ligand>
</feature>
<feature type="binding site" evidence="1">
    <location>
        <position position="37"/>
    </location>
    <ligand>
        <name>substrate</name>
    </ligand>
</feature>
<feature type="binding site" evidence="1">
    <location>
        <position position="45"/>
    </location>
    <ligand>
        <name>substrate</name>
    </ligand>
</feature>
<feature type="binding site" evidence="1">
    <location>
        <position position="49"/>
    </location>
    <ligand>
        <name>substrate</name>
    </ligand>
</feature>
<feature type="binding site" evidence="1">
    <location>
        <begin position="77"/>
        <end position="79"/>
    </location>
    <ligand>
        <name>substrate</name>
    </ligand>
</feature>
<feature type="binding site" evidence="1">
    <location>
        <position position="81"/>
    </location>
    <ligand>
        <name>substrate</name>
    </ligand>
</feature>
<feature type="binding site" evidence="1">
    <location>
        <position position="83"/>
    </location>
    <ligand>
        <name>substrate</name>
    </ligand>
</feature>
<feature type="binding site" evidence="1">
    <location>
        <position position="200"/>
    </location>
    <ligand>
        <name>substrate</name>
    </ligand>
</feature>
<feature type="binding site" evidence="1">
    <location>
        <begin position="206"/>
        <end position="208"/>
    </location>
    <ligand>
        <name>substrate</name>
    </ligand>
</feature>
<feature type="binding site" evidence="1">
    <location>
        <position position="219"/>
    </location>
    <ligand>
        <name>Mg(2+)</name>
        <dbReference type="ChEBI" id="CHEBI:18420"/>
    </ligand>
</feature>
<organism>
    <name type="scientific">Prochlorococcus marinus subsp. pastoris (strain CCMP1986 / NIES-2087 / MED4)</name>
    <dbReference type="NCBI Taxonomy" id="59919"/>
    <lineage>
        <taxon>Bacteria</taxon>
        <taxon>Bacillati</taxon>
        <taxon>Cyanobacteriota</taxon>
        <taxon>Cyanophyceae</taxon>
        <taxon>Synechococcales</taxon>
        <taxon>Prochlorococcaceae</taxon>
        <taxon>Prochlorococcus</taxon>
    </lineage>
</organism>
<evidence type="ECO:0000255" key="1">
    <source>
        <dbReference type="HAMAP-Rule" id="MF_01139"/>
    </source>
</evidence>
<dbReference type="EC" id="2.5.1.-" evidence="1"/>
<dbReference type="EMBL" id="BX548174">
    <property type="protein sequence ID" value="CAE19551.1"/>
    <property type="molecule type" value="Genomic_DNA"/>
</dbReference>
<dbReference type="RefSeq" id="WP_011132725.1">
    <property type="nucleotide sequence ID" value="NC_005072.1"/>
</dbReference>
<dbReference type="SMR" id="Q7V102"/>
<dbReference type="STRING" id="59919.PMM1092"/>
<dbReference type="KEGG" id="pmm:PMM1092"/>
<dbReference type="eggNOG" id="COG0020">
    <property type="taxonomic scope" value="Bacteria"/>
</dbReference>
<dbReference type="HOGENOM" id="CLU_038505_1_1_3"/>
<dbReference type="OrthoDB" id="4191603at2"/>
<dbReference type="Proteomes" id="UP000001026">
    <property type="component" value="Chromosome"/>
</dbReference>
<dbReference type="GO" id="GO:0045547">
    <property type="term" value="F:ditrans,polycis-polyprenyl diphosphate synthase [(2E,6E)-farnesyl diphosphate specific] activity"/>
    <property type="evidence" value="ECO:0007669"/>
    <property type="project" value="TreeGrafter"/>
</dbReference>
<dbReference type="GO" id="GO:0000287">
    <property type="term" value="F:magnesium ion binding"/>
    <property type="evidence" value="ECO:0007669"/>
    <property type="project" value="UniProtKB-UniRule"/>
</dbReference>
<dbReference type="GO" id="GO:0016094">
    <property type="term" value="P:polyprenol biosynthetic process"/>
    <property type="evidence" value="ECO:0007669"/>
    <property type="project" value="TreeGrafter"/>
</dbReference>
<dbReference type="CDD" id="cd00475">
    <property type="entry name" value="Cis_IPPS"/>
    <property type="match status" value="1"/>
</dbReference>
<dbReference type="FunFam" id="3.40.1180.10:FF:000001">
    <property type="entry name" value="(2E,6E)-farnesyl-diphosphate-specific ditrans,polycis-undecaprenyl-diphosphate synthase"/>
    <property type="match status" value="1"/>
</dbReference>
<dbReference type="Gene3D" id="3.40.1180.10">
    <property type="entry name" value="Decaprenyl diphosphate synthase-like"/>
    <property type="match status" value="1"/>
</dbReference>
<dbReference type="HAMAP" id="MF_01139">
    <property type="entry name" value="ISPT"/>
    <property type="match status" value="1"/>
</dbReference>
<dbReference type="InterPro" id="IPR001441">
    <property type="entry name" value="UPP_synth-like"/>
</dbReference>
<dbReference type="InterPro" id="IPR018520">
    <property type="entry name" value="UPP_synth-like_CS"/>
</dbReference>
<dbReference type="InterPro" id="IPR036424">
    <property type="entry name" value="UPP_synth-like_sf"/>
</dbReference>
<dbReference type="NCBIfam" id="NF011405">
    <property type="entry name" value="PRK14830.1"/>
    <property type="match status" value="1"/>
</dbReference>
<dbReference type="NCBIfam" id="NF011406">
    <property type="entry name" value="PRK14831.1"/>
    <property type="match status" value="1"/>
</dbReference>
<dbReference type="NCBIfam" id="TIGR00055">
    <property type="entry name" value="uppS"/>
    <property type="match status" value="1"/>
</dbReference>
<dbReference type="PANTHER" id="PTHR10291:SF0">
    <property type="entry name" value="DEHYDRODOLICHYL DIPHOSPHATE SYNTHASE 2"/>
    <property type="match status" value="1"/>
</dbReference>
<dbReference type="PANTHER" id="PTHR10291">
    <property type="entry name" value="DEHYDRODOLICHYL DIPHOSPHATE SYNTHASE FAMILY MEMBER"/>
    <property type="match status" value="1"/>
</dbReference>
<dbReference type="Pfam" id="PF01255">
    <property type="entry name" value="Prenyltransf"/>
    <property type="match status" value="1"/>
</dbReference>
<dbReference type="SUPFAM" id="SSF64005">
    <property type="entry name" value="Undecaprenyl diphosphate synthase"/>
    <property type="match status" value="1"/>
</dbReference>
<dbReference type="PROSITE" id="PS01066">
    <property type="entry name" value="UPP_SYNTHASE"/>
    <property type="match status" value="1"/>
</dbReference>
<reference key="1">
    <citation type="journal article" date="2003" name="Nature">
        <title>Genome divergence in two Prochlorococcus ecotypes reflects oceanic niche differentiation.</title>
        <authorList>
            <person name="Rocap G."/>
            <person name="Larimer F.W."/>
            <person name="Lamerdin J.E."/>
            <person name="Malfatti S."/>
            <person name="Chain P."/>
            <person name="Ahlgren N.A."/>
            <person name="Arellano A."/>
            <person name="Coleman M."/>
            <person name="Hauser L."/>
            <person name="Hess W.R."/>
            <person name="Johnson Z.I."/>
            <person name="Land M.L."/>
            <person name="Lindell D."/>
            <person name="Post A.F."/>
            <person name="Regala W."/>
            <person name="Shah M."/>
            <person name="Shaw S.L."/>
            <person name="Steglich C."/>
            <person name="Sullivan M.B."/>
            <person name="Ting C.S."/>
            <person name="Tolonen A."/>
            <person name="Webb E.A."/>
            <person name="Zinser E.R."/>
            <person name="Chisholm S.W."/>
        </authorList>
    </citation>
    <scope>NUCLEOTIDE SEQUENCE [LARGE SCALE GENOMIC DNA]</scope>
    <source>
        <strain>CCMP1986 / NIES-2087 / MED4</strain>
    </source>
</reference>
<keyword id="KW-0460">Magnesium</keyword>
<keyword id="KW-0479">Metal-binding</keyword>
<keyword id="KW-0808">Transferase</keyword>
<proteinExistence type="inferred from homology"/>
<comment type="function">
    <text evidence="1">Catalyzes the condensation of isopentenyl diphosphate (IPP) with allylic pyrophosphates generating different type of terpenoids.</text>
</comment>
<comment type="cofactor">
    <cofactor evidence="1">
        <name>Mg(2+)</name>
        <dbReference type="ChEBI" id="CHEBI:18420"/>
    </cofactor>
    <text evidence="1">Binds 2 magnesium ions per subunit.</text>
</comment>
<comment type="subunit">
    <text evidence="1">Homodimer.</text>
</comment>
<comment type="similarity">
    <text evidence="1">Belongs to the UPP synthase family.</text>
</comment>